<proteinExistence type="evidence at protein level"/>
<comment type="function">
    <text evidence="1">Catalyzes the reversible epimerization of D-ribulose 5-phosphate to D-xylulose 5-phosphate.</text>
</comment>
<comment type="catalytic activity">
    <reaction evidence="1">
        <text>D-ribulose 5-phosphate = D-xylulose 5-phosphate</text>
        <dbReference type="Rhea" id="RHEA:13677"/>
        <dbReference type="ChEBI" id="CHEBI:57737"/>
        <dbReference type="ChEBI" id="CHEBI:58121"/>
        <dbReference type="EC" id="5.1.3.1"/>
    </reaction>
</comment>
<comment type="cofactor">
    <cofactor evidence="1">
        <name>Fe(2+)</name>
        <dbReference type="ChEBI" id="CHEBI:29033"/>
    </cofactor>
    <cofactor evidence="1">
        <name>Mn(2+)</name>
        <dbReference type="ChEBI" id="CHEBI:29035"/>
    </cofactor>
    <cofactor evidence="1">
        <name>Zn(2+)</name>
        <dbReference type="ChEBI" id="CHEBI:29105"/>
    </cofactor>
    <cofactor evidence="1">
        <name>Co(2+)</name>
        <dbReference type="ChEBI" id="CHEBI:48828"/>
    </cofactor>
    <text evidence="1">Binds 1 divalent metal cation per subunit. Active with Fe(2+), and probably also with Mn(2+), Zn(2+) and Co(2+).</text>
</comment>
<comment type="pathway">
    <text evidence="1">Carbohydrate degradation.</text>
</comment>
<comment type="subunit">
    <text evidence="2">Homodimer.</text>
</comment>
<comment type="interaction">
    <interactant intactId="EBI-372480">
        <id>Q96AT9</id>
    </interactant>
    <interactant intactId="EBI-742388">
        <id>Q9H8W4</id>
        <label>PLEKHF2</label>
    </interactant>
    <organismsDiffer>false</organismsDiffer>
    <experiments>3</experiments>
</comment>
<comment type="interaction">
    <interactant intactId="EBI-372480">
        <id>Q96AT9</id>
    </interactant>
    <interactant intactId="EBI-372480">
        <id>Q96AT9</id>
        <label>RPE</label>
    </interactant>
    <organismsDiffer>false</organismsDiffer>
    <experiments>6</experiments>
</comment>
<comment type="alternative products">
    <event type="alternative splicing"/>
    <isoform>
        <id>Q96AT9-1</id>
        <name>1</name>
        <sequence type="displayed"/>
    </isoform>
    <isoform>
        <id>Q96AT9-2</id>
        <name>2</name>
        <sequence type="described" ref="VSP_008317 VSP_008318"/>
    </isoform>
    <isoform>
        <id>Q96AT9-3</id>
        <name>3</name>
        <sequence type="described" ref="VSP_047117 VSP_008318"/>
    </isoform>
    <isoform>
        <id>Q96AT9-4</id>
        <name>4</name>
        <sequence type="described" ref="VSP_055265"/>
    </isoform>
    <isoform>
        <id>Q96AT9-5</id>
        <name>5</name>
        <sequence type="described" ref="VSP_047117"/>
    </isoform>
</comment>
<comment type="similarity">
    <text evidence="4">Belongs to the ribulose-phosphate 3-epimerase family.</text>
</comment>
<comment type="sequence caution" evidence="4">
    <conflict type="frameshift">
        <sequence resource="EMBL-CDS" id="BAB71076"/>
    </conflict>
</comment>
<comment type="sequence caution" evidence="4">
    <conflict type="frameshift">
        <sequence resource="EMBL-CDS" id="BAC04212"/>
    </conflict>
</comment>
<organism>
    <name type="scientific">Homo sapiens</name>
    <name type="common">Human</name>
    <dbReference type="NCBI Taxonomy" id="9606"/>
    <lineage>
        <taxon>Eukaryota</taxon>
        <taxon>Metazoa</taxon>
        <taxon>Chordata</taxon>
        <taxon>Craniata</taxon>
        <taxon>Vertebrata</taxon>
        <taxon>Euteleostomi</taxon>
        <taxon>Mammalia</taxon>
        <taxon>Eutheria</taxon>
        <taxon>Euarchontoglires</taxon>
        <taxon>Primates</taxon>
        <taxon>Haplorrhini</taxon>
        <taxon>Catarrhini</taxon>
        <taxon>Hominidae</taxon>
        <taxon>Homo</taxon>
    </lineage>
</organism>
<sequence>MASGCKIGPSILNSDLANLGAECLRMLDSGADYLHLDVMDGHFVPNITFGHPVVESLRKQLGQDPFFDMHMMVSKPEQWVKPMAVAGANQYTFHLEATENPGALIKDIRENGMKVGLAIKPGTSVEYLAPWANQIDMALVMTVEPGFGGQKFMEDMMPKVHWLRTQFPSLDIEVDGGVGPDTVHKCAEAGANMIVSGSAIMRSEDPRSVINLLRNVCSEAAQKRSLDR</sequence>
<gene>
    <name type="primary">RPE</name>
    <name type="ORF">HUSSY-17</name>
</gene>
<keyword id="KW-0002">3D-structure</keyword>
<keyword id="KW-0007">Acetylation</keyword>
<keyword id="KW-0025">Alternative splicing</keyword>
<keyword id="KW-0119">Carbohydrate metabolism</keyword>
<keyword id="KW-0170">Cobalt</keyword>
<keyword id="KW-0408">Iron</keyword>
<keyword id="KW-0413">Isomerase</keyword>
<keyword id="KW-0464">Manganese</keyword>
<keyword id="KW-0479">Metal-binding</keyword>
<keyword id="KW-1267">Proteomics identification</keyword>
<keyword id="KW-1185">Reference proteome</keyword>
<keyword id="KW-0862">Zinc</keyword>
<name>RPE_HUMAN</name>
<accession>Q96AT9</accession>
<accession>A8K4S0</accession>
<accession>B4E016</accession>
<accession>C9JPQ7</accession>
<accession>O43767</accession>
<accession>Q53TV9</accession>
<accession>Q8N215</accession>
<accession>Q96N34</accession>
<accession>Q9BSB5</accession>
<dbReference type="EC" id="5.1.3.1" evidence="1"/>
<dbReference type="EMBL" id="AK056028">
    <property type="protein sequence ID" value="BAB71076.1"/>
    <property type="status" value="ALT_FRAME"/>
    <property type="molecule type" value="mRNA"/>
</dbReference>
<dbReference type="EMBL" id="AK093658">
    <property type="protein sequence ID" value="BAC04212.1"/>
    <property type="status" value="ALT_FRAME"/>
    <property type="molecule type" value="mRNA"/>
</dbReference>
<dbReference type="EMBL" id="AK291035">
    <property type="protein sequence ID" value="BAF83724.1"/>
    <property type="molecule type" value="mRNA"/>
</dbReference>
<dbReference type="EMBL" id="AK303184">
    <property type="protein sequence ID" value="BAG64278.1"/>
    <property type="molecule type" value="mRNA"/>
</dbReference>
<dbReference type="EMBL" id="AC007038">
    <property type="protein sequence ID" value="AAX93087.1"/>
    <property type="molecule type" value="Genomic_DNA"/>
</dbReference>
<dbReference type="EMBL" id="CH471063">
    <property type="protein sequence ID" value="EAW70473.1"/>
    <property type="molecule type" value="Genomic_DNA"/>
</dbReference>
<dbReference type="EMBL" id="CH471063">
    <property type="protein sequence ID" value="EAW70474.1"/>
    <property type="molecule type" value="Genomic_DNA"/>
</dbReference>
<dbReference type="EMBL" id="BC005148">
    <property type="protein sequence ID" value="AAH05148.2"/>
    <property type="molecule type" value="mRNA"/>
</dbReference>
<dbReference type="EMBL" id="BC016764">
    <property type="protein sequence ID" value="AAH16764.1"/>
    <property type="molecule type" value="mRNA"/>
</dbReference>
<dbReference type="EMBL" id="BC072401">
    <property type="protein sequence ID" value="AAH72401.1"/>
    <property type="molecule type" value="mRNA"/>
</dbReference>
<dbReference type="EMBL" id="AJ224326">
    <property type="protein sequence ID" value="CAA11895.1"/>
    <property type="molecule type" value="mRNA"/>
</dbReference>
<dbReference type="CCDS" id="CCDS2388.1">
    <molecule id="Q96AT9-1"/>
</dbReference>
<dbReference type="CCDS" id="CCDS42810.1">
    <molecule id="Q96AT9-3"/>
</dbReference>
<dbReference type="CCDS" id="CCDS63107.1">
    <molecule id="Q96AT9-4"/>
</dbReference>
<dbReference type="CCDS" id="CCDS63108.1">
    <molecule id="Q96AT9-5"/>
</dbReference>
<dbReference type="RefSeq" id="NP_001265211.1">
    <molecule id="Q96AT9-3"/>
    <property type="nucleotide sequence ID" value="NM_001278282.2"/>
</dbReference>
<dbReference type="RefSeq" id="NP_001265212.1">
    <molecule id="Q96AT9-3"/>
    <property type="nucleotide sequence ID" value="NM_001278283.2"/>
</dbReference>
<dbReference type="RefSeq" id="NP_001265214.1">
    <molecule id="Q96AT9-4"/>
    <property type="nucleotide sequence ID" value="NM_001278285.2"/>
</dbReference>
<dbReference type="RefSeq" id="NP_001265215.1">
    <molecule id="Q96AT9-5"/>
    <property type="nucleotide sequence ID" value="NM_001278286.2"/>
</dbReference>
<dbReference type="RefSeq" id="NP_001265217.1">
    <molecule id="Q96AT9-5"/>
    <property type="nucleotide sequence ID" value="NM_001278288.2"/>
</dbReference>
<dbReference type="RefSeq" id="NP_001265218.1">
    <property type="nucleotide sequence ID" value="NM_001278289.1"/>
</dbReference>
<dbReference type="RefSeq" id="NP_001305855.1">
    <property type="nucleotide sequence ID" value="NM_001318926.1"/>
</dbReference>
<dbReference type="RefSeq" id="NP_001305856.1">
    <property type="nucleotide sequence ID" value="NM_001318927.1"/>
</dbReference>
<dbReference type="RefSeq" id="NP_001305857.1">
    <property type="nucleotide sequence ID" value="NM_001318928.1"/>
</dbReference>
<dbReference type="RefSeq" id="NP_001305858.1">
    <property type="nucleotide sequence ID" value="NM_001318929.1"/>
</dbReference>
<dbReference type="RefSeq" id="NP_001305859.1">
    <molecule id="Q96AT9-5"/>
    <property type="nucleotide sequence ID" value="NM_001318930.2"/>
</dbReference>
<dbReference type="RefSeq" id="NP_001305860.1">
    <molecule id="Q96AT9-5"/>
    <property type="nucleotide sequence ID" value="NM_001318931.2"/>
</dbReference>
<dbReference type="RefSeq" id="NP_008847.1">
    <molecule id="Q96AT9-3"/>
    <property type="nucleotide sequence ID" value="NM_006916.3"/>
</dbReference>
<dbReference type="RefSeq" id="NP_954699.1">
    <molecule id="Q96AT9-1"/>
    <property type="nucleotide sequence ID" value="NM_199229.3"/>
</dbReference>
<dbReference type="RefSeq" id="XP_006712740.1">
    <molecule id="Q96AT9-5"/>
    <property type="nucleotide sequence ID" value="XM_006712677.5"/>
</dbReference>
<dbReference type="RefSeq" id="XP_047301337.1">
    <molecule id="Q96AT9-5"/>
    <property type="nucleotide sequence ID" value="XM_047445381.1"/>
</dbReference>
<dbReference type="RefSeq" id="XP_054199260.1">
    <molecule id="Q96AT9-5"/>
    <property type="nucleotide sequence ID" value="XM_054343285.1"/>
</dbReference>
<dbReference type="RefSeq" id="XP_054199261.1">
    <molecule id="Q96AT9-5"/>
    <property type="nucleotide sequence ID" value="XM_054343286.1"/>
</dbReference>
<dbReference type="PDB" id="3OVP">
    <property type="method" value="X-ray"/>
    <property type="resolution" value="1.70 A"/>
    <property type="chains" value="A/B=1-228"/>
</dbReference>
<dbReference type="PDB" id="3OVQ">
    <property type="method" value="X-ray"/>
    <property type="resolution" value="2.00 A"/>
    <property type="chains" value="A/B=1-228"/>
</dbReference>
<dbReference type="PDB" id="3OVR">
    <property type="method" value="X-ray"/>
    <property type="resolution" value="1.95 A"/>
    <property type="chains" value="A/B=1-228"/>
</dbReference>
<dbReference type="PDB" id="3QC3">
    <property type="method" value="X-ray"/>
    <property type="resolution" value="2.20 A"/>
    <property type="chains" value="A/B=1-224"/>
</dbReference>
<dbReference type="PDBsum" id="3OVP"/>
<dbReference type="PDBsum" id="3OVQ"/>
<dbReference type="PDBsum" id="3OVR"/>
<dbReference type="PDBsum" id="3QC3"/>
<dbReference type="SMR" id="Q96AT9"/>
<dbReference type="BioGRID" id="112040">
    <property type="interactions" value="58"/>
</dbReference>
<dbReference type="FunCoup" id="Q96AT9">
    <property type="interactions" value="1416"/>
</dbReference>
<dbReference type="IntAct" id="Q96AT9">
    <property type="interactions" value="8"/>
</dbReference>
<dbReference type="STRING" id="9606.ENSP00000352401"/>
<dbReference type="DrugBank" id="DB00153">
    <property type="generic name" value="Ergocalciferol"/>
</dbReference>
<dbReference type="GlyGen" id="Q96AT9">
    <property type="glycosylation" value="1 site, 1 O-linked glycan (1 site)"/>
</dbReference>
<dbReference type="iPTMnet" id="Q96AT9"/>
<dbReference type="PhosphoSitePlus" id="Q96AT9"/>
<dbReference type="BioMuta" id="RPE"/>
<dbReference type="DMDM" id="34924986"/>
<dbReference type="jPOST" id="Q96AT9"/>
<dbReference type="MassIVE" id="Q96AT9"/>
<dbReference type="PaxDb" id="9606-ENSP00000352401"/>
<dbReference type="PeptideAtlas" id="Q96AT9"/>
<dbReference type="ProteomicsDB" id="11146"/>
<dbReference type="ProteomicsDB" id="5637"/>
<dbReference type="ProteomicsDB" id="62553"/>
<dbReference type="ProteomicsDB" id="75997">
    <molecule id="Q96AT9-1"/>
</dbReference>
<dbReference type="ProteomicsDB" id="75998">
    <molecule id="Q96AT9-2"/>
</dbReference>
<dbReference type="Pumba" id="Q96AT9"/>
<dbReference type="TopDownProteomics" id="Q96AT9-1">
    <molecule id="Q96AT9-1"/>
</dbReference>
<dbReference type="TopDownProteomics" id="Q96AT9-2">
    <molecule id="Q96AT9-2"/>
</dbReference>
<dbReference type="Antibodypedia" id="34203">
    <property type="antibodies" value="130 antibodies from 25 providers"/>
</dbReference>
<dbReference type="DNASU" id="6120"/>
<dbReference type="Ensembl" id="ENST00000354506.10">
    <molecule id="Q96AT9-4"/>
    <property type="protein sequence ID" value="ENSP00000346501.7"/>
    <property type="gene ID" value="ENSG00000197713.15"/>
</dbReference>
<dbReference type="Ensembl" id="ENST00000359429.11">
    <molecule id="Q96AT9-1"/>
    <property type="protein sequence ID" value="ENSP00000352401.6"/>
    <property type="gene ID" value="ENSG00000197713.15"/>
</dbReference>
<dbReference type="Ensembl" id="ENST00000411934.6">
    <molecule id="Q96AT9-5"/>
    <property type="protein sequence ID" value="ENSP00000389411.1"/>
    <property type="gene ID" value="ENSG00000197713.15"/>
</dbReference>
<dbReference type="Ensembl" id="ENST00000429921.5">
    <molecule id="Q96AT9-3"/>
    <property type="protein sequence ID" value="ENSP00000401838.1"/>
    <property type="gene ID" value="ENSG00000197713.15"/>
</dbReference>
<dbReference type="Ensembl" id="ENST00000436630.6">
    <molecule id="Q96AT9-3"/>
    <property type="protein sequence ID" value="ENSP00000403808.2"/>
    <property type="gene ID" value="ENSG00000197713.15"/>
</dbReference>
<dbReference type="Ensembl" id="ENST00000438204.6">
    <molecule id="Q96AT9-5"/>
    <property type="protein sequence ID" value="ENSP00000402061.1"/>
    <property type="gene ID" value="ENSG00000197713.15"/>
</dbReference>
<dbReference type="Ensembl" id="ENST00000454822.5">
    <molecule id="Q96AT9-3"/>
    <property type="protein sequence ID" value="ENSP00000394455.1"/>
    <property type="gene ID" value="ENSG00000197713.15"/>
</dbReference>
<dbReference type="GeneID" id="6120"/>
<dbReference type="KEGG" id="hsa:6120"/>
<dbReference type="MANE-Select" id="ENST00000359429.11">
    <property type="protein sequence ID" value="ENSP00000352401.6"/>
    <property type="RefSeq nucleotide sequence ID" value="NM_199229.3"/>
    <property type="RefSeq protein sequence ID" value="NP_954699.1"/>
</dbReference>
<dbReference type="UCSC" id="uc002vdn.5">
    <molecule id="Q96AT9-1"/>
    <property type="organism name" value="human"/>
</dbReference>
<dbReference type="AGR" id="HGNC:10293"/>
<dbReference type="CTD" id="6120"/>
<dbReference type="DisGeNET" id="6120"/>
<dbReference type="GeneCards" id="RPE"/>
<dbReference type="HGNC" id="HGNC:10293">
    <property type="gene designation" value="RPE"/>
</dbReference>
<dbReference type="HPA" id="ENSG00000197713">
    <property type="expression patterns" value="Low tissue specificity"/>
</dbReference>
<dbReference type="MIM" id="180480">
    <property type="type" value="gene"/>
</dbReference>
<dbReference type="neXtProt" id="NX_Q96AT9"/>
<dbReference type="OpenTargets" id="ENSG00000197713"/>
<dbReference type="PharmGKB" id="PA34654"/>
<dbReference type="VEuPathDB" id="HostDB:ENSG00000197713"/>
<dbReference type="eggNOG" id="KOG3111">
    <property type="taxonomic scope" value="Eukaryota"/>
</dbReference>
<dbReference type="GeneTree" id="ENSGT00390000001447"/>
<dbReference type="InParanoid" id="Q96AT9"/>
<dbReference type="OMA" id="CHLMIED"/>
<dbReference type="OrthoDB" id="1927044at2759"/>
<dbReference type="PAN-GO" id="Q96AT9">
    <property type="GO annotations" value="5 GO annotations based on evolutionary models"/>
</dbReference>
<dbReference type="PhylomeDB" id="Q96AT9"/>
<dbReference type="TreeFam" id="TF300157"/>
<dbReference type="BRENDA" id="5.1.3.1">
    <property type="organism ID" value="2681"/>
</dbReference>
<dbReference type="PathwayCommons" id="Q96AT9"/>
<dbReference type="Reactome" id="R-HSA-71336">
    <property type="pathway name" value="Pentose phosphate pathway"/>
</dbReference>
<dbReference type="SignaLink" id="Q96AT9"/>
<dbReference type="SIGNOR" id="Q96AT9"/>
<dbReference type="BioGRID-ORCS" id="6120">
    <property type="hits" value="651 hits in 1166 CRISPR screens"/>
</dbReference>
<dbReference type="ChiTaRS" id="RPE">
    <property type="organism name" value="human"/>
</dbReference>
<dbReference type="EvolutionaryTrace" id="Q96AT9"/>
<dbReference type="GeneWiki" id="RPE_(gene)"/>
<dbReference type="GenomeRNAi" id="6120"/>
<dbReference type="Pharos" id="Q96AT9">
    <property type="development level" value="Tbio"/>
</dbReference>
<dbReference type="PRO" id="PR:Q96AT9"/>
<dbReference type="Proteomes" id="UP000005640">
    <property type="component" value="Chromosome 2"/>
</dbReference>
<dbReference type="RNAct" id="Q96AT9">
    <property type="molecule type" value="protein"/>
</dbReference>
<dbReference type="Bgee" id="ENSG00000197713">
    <property type="expression patterns" value="Expressed in adrenal tissue and 193 other cell types or tissues"/>
</dbReference>
<dbReference type="ExpressionAtlas" id="Q96AT9">
    <property type="expression patterns" value="baseline and differential"/>
</dbReference>
<dbReference type="GO" id="GO:0005829">
    <property type="term" value="C:cytosol"/>
    <property type="evidence" value="ECO:0000318"/>
    <property type="project" value="GO_Central"/>
</dbReference>
<dbReference type="GO" id="GO:0070062">
    <property type="term" value="C:extracellular exosome"/>
    <property type="evidence" value="ECO:0007005"/>
    <property type="project" value="UniProtKB"/>
</dbReference>
<dbReference type="GO" id="GO:0004750">
    <property type="term" value="F:D-ribulose-phosphate 3-epimerase activity"/>
    <property type="evidence" value="ECO:0000314"/>
    <property type="project" value="UniProtKB"/>
</dbReference>
<dbReference type="GO" id="GO:0042802">
    <property type="term" value="F:identical protein binding"/>
    <property type="evidence" value="ECO:0000353"/>
    <property type="project" value="IntAct"/>
</dbReference>
<dbReference type="GO" id="GO:0046872">
    <property type="term" value="F:metal ion binding"/>
    <property type="evidence" value="ECO:0000314"/>
    <property type="project" value="UniProtKB"/>
</dbReference>
<dbReference type="GO" id="GO:0042803">
    <property type="term" value="F:protein homodimerization activity"/>
    <property type="evidence" value="ECO:0000353"/>
    <property type="project" value="UniProtKB"/>
</dbReference>
<dbReference type="GO" id="GO:0005975">
    <property type="term" value="P:carbohydrate metabolic process"/>
    <property type="evidence" value="ECO:0000314"/>
    <property type="project" value="UniProtKB"/>
</dbReference>
<dbReference type="GO" id="GO:0006098">
    <property type="term" value="P:pentose-phosphate shunt"/>
    <property type="evidence" value="ECO:0000314"/>
    <property type="project" value="UniProtKB"/>
</dbReference>
<dbReference type="GO" id="GO:0009052">
    <property type="term" value="P:pentose-phosphate shunt, non-oxidative branch"/>
    <property type="evidence" value="ECO:0000318"/>
    <property type="project" value="GO_Central"/>
</dbReference>
<dbReference type="CDD" id="cd00429">
    <property type="entry name" value="RPE"/>
    <property type="match status" value="1"/>
</dbReference>
<dbReference type="FunFam" id="3.20.20.70:FF:000191">
    <property type="entry name" value="ribulose-phosphate 3-epimerase isoform X2"/>
    <property type="match status" value="1"/>
</dbReference>
<dbReference type="Gene3D" id="3.20.20.70">
    <property type="entry name" value="Aldolase class I"/>
    <property type="match status" value="1"/>
</dbReference>
<dbReference type="HAMAP" id="MF_02227">
    <property type="entry name" value="RPE"/>
    <property type="match status" value="1"/>
</dbReference>
<dbReference type="InterPro" id="IPR013785">
    <property type="entry name" value="Aldolase_TIM"/>
</dbReference>
<dbReference type="InterPro" id="IPR026019">
    <property type="entry name" value="Ribul_P_3_epim"/>
</dbReference>
<dbReference type="InterPro" id="IPR000056">
    <property type="entry name" value="Ribul_P_3_epim-like"/>
</dbReference>
<dbReference type="InterPro" id="IPR011060">
    <property type="entry name" value="RibuloseP-bd_barrel"/>
</dbReference>
<dbReference type="NCBIfam" id="NF004076">
    <property type="entry name" value="PRK05581.1-4"/>
    <property type="match status" value="1"/>
</dbReference>
<dbReference type="NCBIfam" id="TIGR01163">
    <property type="entry name" value="rpe"/>
    <property type="match status" value="1"/>
</dbReference>
<dbReference type="PANTHER" id="PTHR11749">
    <property type="entry name" value="RIBULOSE-5-PHOSPHATE-3-EPIMERASE"/>
    <property type="match status" value="1"/>
</dbReference>
<dbReference type="Pfam" id="PF00834">
    <property type="entry name" value="Ribul_P_3_epim"/>
    <property type="match status" value="1"/>
</dbReference>
<dbReference type="PIRSF" id="PIRSF001461">
    <property type="entry name" value="RPE"/>
    <property type="match status" value="1"/>
</dbReference>
<dbReference type="SUPFAM" id="SSF51366">
    <property type="entry name" value="Ribulose-phoshate binding barrel"/>
    <property type="match status" value="1"/>
</dbReference>
<dbReference type="PROSITE" id="PS01085">
    <property type="entry name" value="RIBUL_P_3_EPIMER_1"/>
    <property type="match status" value="1"/>
</dbReference>
<dbReference type="PROSITE" id="PS01086">
    <property type="entry name" value="RIBUL_P_3_EPIMER_2"/>
    <property type="match status" value="1"/>
</dbReference>
<reference key="1">
    <citation type="journal article" date="2004" name="Nat. Genet.">
        <title>Complete sequencing and characterization of 21,243 full-length human cDNAs.</title>
        <authorList>
            <person name="Ota T."/>
            <person name="Suzuki Y."/>
            <person name="Nishikawa T."/>
            <person name="Otsuki T."/>
            <person name="Sugiyama T."/>
            <person name="Irie R."/>
            <person name="Wakamatsu A."/>
            <person name="Hayashi K."/>
            <person name="Sato H."/>
            <person name="Nagai K."/>
            <person name="Kimura K."/>
            <person name="Makita H."/>
            <person name="Sekine M."/>
            <person name="Obayashi M."/>
            <person name="Nishi T."/>
            <person name="Shibahara T."/>
            <person name="Tanaka T."/>
            <person name="Ishii S."/>
            <person name="Yamamoto J."/>
            <person name="Saito K."/>
            <person name="Kawai Y."/>
            <person name="Isono Y."/>
            <person name="Nakamura Y."/>
            <person name="Nagahari K."/>
            <person name="Murakami K."/>
            <person name="Yasuda T."/>
            <person name="Iwayanagi T."/>
            <person name="Wagatsuma M."/>
            <person name="Shiratori A."/>
            <person name="Sudo H."/>
            <person name="Hosoiri T."/>
            <person name="Kaku Y."/>
            <person name="Kodaira H."/>
            <person name="Kondo H."/>
            <person name="Sugawara M."/>
            <person name="Takahashi M."/>
            <person name="Kanda K."/>
            <person name="Yokoi T."/>
            <person name="Furuya T."/>
            <person name="Kikkawa E."/>
            <person name="Omura Y."/>
            <person name="Abe K."/>
            <person name="Kamihara K."/>
            <person name="Katsuta N."/>
            <person name="Sato K."/>
            <person name="Tanikawa M."/>
            <person name="Yamazaki M."/>
            <person name="Ninomiya K."/>
            <person name="Ishibashi T."/>
            <person name="Yamashita H."/>
            <person name="Murakawa K."/>
            <person name="Fujimori K."/>
            <person name="Tanai H."/>
            <person name="Kimata M."/>
            <person name="Watanabe M."/>
            <person name="Hiraoka S."/>
            <person name="Chiba Y."/>
            <person name="Ishida S."/>
            <person name="Ono Y."/>
            <person name="Takiguchi S."/>
            <person name="Watanabe S."/>
            <person name="Yosida M."/>
            <person name="Hotuta T."/>
            <person name="Kusano J."/>
            <person name="Kanehori K."/>
            <person name="Takahashi-Fujii A."/>
            <person name="Hara H."/>
            <person name="Tanase T.-O."/>
            <person name="Nomura Y."/>
            <person name="Togiya S."/>
            <person name="Komai F."/>
            <person name="Hara R."/>
            <person name="Takeuchi K."/>
            <person name="Arita M."/>
            <person name="Imose N."/>
            <person name="Musashino K."/>
            <person name="Yuuki H."/>
            <person name="Oshima A."/>
            <person name="Sasaki N."/>
            <person name="Aotsuka S."/>
            <person name="Yoshikawa Y."/>
            <person name="Matsunawa H."/>
            <person name="Ichihara T."/>
            <person name="Shiohata N."/>
            <person name="Sano S."/>
            <person name="Moriya S."/>
            <person name="Momiyama H."/>
            <person name="Satoh N."/>
            <person name="Takami S."/>
            <person name="Terashima Y."/>
            <person name="Suzuki O."/>
            <person name="Nakagawa S."/>
            <person name="Senoh A."/>
            <person name="Mizoguchi H."/>
            <person name="Goto Y."/>
            <person name="Shimizu F."/>
            <person name="Wakebe H."/>
            <person name="Hishigaki H."/>
            <person name="Watanabe T."/>
            <person name="Sugiyama A."/>
            <person name="Takemoto M."/>
            <person name="Kawakami B."/>
            <person name="Yamazaki M."/>
            <person name="Watanabe K."/>
            <person name="Kumagai A."/>
            <person name="Itakura S."/>
            <person name="Fukuzumi Y."/>
            <person name="Fujimori Y."/>
            <person name="Komiyama M."/>
            <person name="Tashiro H."/>
            <person name="Tanigami A."/>
            <person name="Fujiwara T."/>
            <person name="Ono T."/>
            <person name="Yamada K."/>
            <person name="Fujii Y."/>
            <person name="Ozaki K."/>
            <person name="Hirao M."/>
            <person name="Ohmori Y."/>
            <person name="Kawabata A."/>
            <person name="Hikiji T."/>
            <person name="Kobatake N."/>
            <person name="Inagaki H."/>
            <person name="Ikema Y."/>
            <person name="Okamoto S."/>
            <person name="Okitani R."/>
            <person name="Kawakami T."/>
            <person name="Noguchi S."/>
            <person name="Itoh T."/>
            <person name="Shigeta K."/>
            <person name="Senba T."/>
            <person name="Matsumura K."/>
            <person name="Nakajima Y."/>
            <person name="Mizuno T."/>
            <person name="Morinaga M."/>
            <person name="Sasaki M."/>
            <person name="Togashi T."/>
            <person name="Oyama M."/>
            <person name="Hata H."/>
            <person name="Watanabe M."/>
            <person name="Komatsu T."/>
            <person name="Mizushima-Sugano J."/>
            <person name="Satoh T."/>
            <person name="Shirai Y."/>
            <person name="Takahashi Y."/>
            <person name="Nakagawa K."/>
            <person name="Okumura K."/>
            <person name="Nagase T."/>
            <person name="Nomura N."/>
            <person name="Kikuchi H."/>
            <person name="Masuho Y."/>
            <person name="Yamashita R."/>
            <person name="Nakai K."/>
            <person name="Yada T."/>
            <person name="Nakamura Y."/>
            <person name="Ohara O."/>
            <person name="Isogai T."/>
            <person name="Sugano S."/>
        </authorList>
    </citation>
    <scope>NUCLEOTIDE SEQUENCE [LARGE SCALE MRNA] (ISOFORMS 1; 2 AND 4)</scope>
    <source>
        <tissue>Thymus</tissue>
    </source>
</reference>
<reference key="2">
    <citation type="journal article" date="2005" name="Nature">
        <title>Generation and annotation of the DNA sequences of human chromosomes 2 and 4.</title>
        <authorList>
            <person name="Hillier L.W."/>
            <person name="Graves T.A."/>
            <person name="Fulton R.S."/>
            <person name="Fulton L.A."/>
            <person name="Pepin K.H."/>
            <person name="Minx P."/>
            <person name="Wagner-McPherson C."/>
            <person name="Layman D."/>
            <person name="Wylie K."/>
            <person name="Sekhon M."/>
            <person name="Becker M.C."/>
            <person name="Fewell G.A."/>
            <person name="Delehaunty K.D."/>
            <person name="Miner T.L."/>
            <person name="Nash W.E."/>
            <person name="Kremitzki C."/>
            <person name="Oddy L."/>
            <person name="Du H."/>
            <person name="Sun H."/>
            <person name="Bradshaw-Cordum H."/>
            <person name="Ali J."/>
            <person name="Carter J."/>
            <person name="Cordes M."/>
            <person name="Harris A."/>
            <person name="Isak A."/>
            <person name="van Brunt A."/>
            <person name="Nguyen C."/>
            <person name="Du F."/>
            <person name="Courtney L."/>
            <person name="Kalicki J."/>
            <person name="Ozersky P."/>
            <person name="Abbott S."/>
            <person name="Armstrong J."/>
            <person name="Belter E.A."/>
            <person name="Caruso L."/>
            <person name="Cedroni M."/>
            <person name="Cotton M."/>
            <person name="Davidson T."/>
            <person name="Desai A."/>
            <person name="Elliott G."/>
            <person name="Erb T."/>
            <person name="Fronick C."/>
            <person name="Gaige T."/>
            <person name="Haakenson W."/>
            <person name="Haglund K."/>
            <person name="Holmes A."/>
            <person name="Harkins R."/>
            <person name="Kim K."/>
            <person name="Kruchowski S.S."/>
            <person name="Strong C.M."/>
            <person name="Grewal N."/>
            <person name="Goyea E."/>
            <person name="Hou S."/>
            <person name="Levy A."/>
            <person name="Martinka S."/>
            <person name="Mead K."/>
            <person name="McLellan M.D."/>
            <person name="Meyer R."/>
            <person name="Randall-Maher J."/>
            <person name="Tomlinson C."/>
            <person name="Dauphin-Kohlberg S."/>
            <person name="Kozlowicz-Reilly A."/>
            <person name="Shah N."/>
            <person name="Swearengen-Shahid S."/>
            <person name="Snider J."/>
            <person name="Strong J.T."/>
            <person name="Thompson J."/>
            <person name="Yoakum M."/>
            <person name="Leonard S."/>
            <person name="Pearman C."/>
            <person name="Trani L."/>
            <person name="Radionenko M."/>
            <person name="Waligorski J.E."/>
            <person name="Wang C."/>
            <person name="Rock S.M."/>
            <person name="Tin-Wollam A.-M."/>
            <person name="Maupin R."/>
            <person name="Latreille P."/>
            <person name="Wendl M.C."/>
            <person name="Yang S.-P."/>
            <person name="Pohl C."/>
            <person name="Wallis J.W."/>
            <person name="Spieth J."/>
            <person name="Bieri T.A."/>
            <person name="Berkowicz N."/>
            <person name="Nelson J.O."/>
            <person name="Osborne J."/>
            <person name="Ding L."/>
            <person name="Meyer R."/>
            <person name="Sabo A."/>
            <person name="Shotland Y."/>
            <person name="Sinha P."/>
            <person name="Wohldmann P.E."/>
            <person name="Cook L.L."/>
            <person name="Hickenbotham M.T."/>
            <person name="Eldred J."/>
            <person name="Williams D."/>
            <person name="Jones T.A."/>
            <person name="She X."/>
            <person name="Ciccarelli F.D."/>
            <person name="Izaurralde E."/>
            <person name="Taylor J."/>
            <person name="Schmutz J."/>
            <person name="Myers R.M."/>
            <person name="Cox D.R."/>
            <person name="Huang X."/>
            <person name="McPherson J.D."/>
            <person name="Mardis E.R."/>
            <person name="Clifton S.W."/>
            <person name="Warren W.C."/>
            <person name="Chinwalla A.T."/>
            <person name="Eddy S.R."/>
            <person name="Marra M.A."/>
            <person name="Ovcharenko I."/>
            <person name="Furey T.S."/>
            <person name="Miller W."/>
            <person name="Eichler E.E."/>
            <person name="Bork P."/>
            <person name="Suyama M."/>
            <person name="Torrents D."/>
            <person name="Waterston R.H."/>
            <person name="Wilson R.K."/>
        </authorList>
    </citation>
    <scope>NUCLEOTIDE SEQUENCE [LARGE SCALE GENOMIC DNA]</scope>
</reference>
<reference key="3">
    <citation type="submission" date="2005-07" db="EMBL/GenBank/DDBJ databases">
        <authorList>
            <person name="Mural R.J."/>
            <person name="Istrail S."/>
            <person name="Sutton G.G."/>
            <person name="Florea L."/>
            <person name="Halpern A.L."/>
            <person name="Mobarry C.M."/>
            <person name="Lippert R."/>
            <person name="Walenz B."/>
            <person name="Shatkay H."/>
            <person name="Dew I."/>
            <person name="Miller J.R."/>
            <person name="Flanigan M.J."/>
            <person name="Edwards N.J."/>
            <person name="Bolanos R."/>
            <person name="Fasulo D."/>
            <person name="Halldorsson B.V."/>
            <person name="Hannenhalli S."/>
            <person name="Turner R."/>
            <person name="Yooseph S."/>
            <person name="Lu F."/>
            <person name="Nusskern D.R."/>
            <person name="Shue B.C."/>
            <person name="Zheng X.H."/>
            <person name="Zhong F."/>
            <person name="Delcher A.L."/>
            <person name="Huson D.H."/>
            <person name="Kravitz S.A."/>
            <person name="Mouchard L."/>
            <person name="Reinert K."/>
            <person name="Remington K.A."/>
            <person name="Clark A.G."/>
            <person name="Waterman M.S."/>
            <person name="Eichler E.E."/>
            <person name="Adams M.D."/>
            <person name="Hunkapiller M.W."/>
            <person name="Myers E.W."/>
            <person name="Venter J.C."/>
        </authorList>
    </citation>
    <scope>NUCLEOTIDE SEQUENCE [LARGE SCALE GENOMIC DNA]</scope>
</reference>
<reference key="4">
    <citation type="journal article" date="2004" name="Genome Res.">
        <title>The status, quality, and expansion of the NIH full-length cDNA project: the Mammalian Gene Collection (MGC).</title>
        <authorList>
            <consortium name="The MGC Project Team"/>
        </authorList>
    </citation>
    <scope>NUCLEOTIDE SEQUENCE [LARGE SCALE MRNA] (ISOFORM 1)</scope>
    <source>
        <tissue>Bone marrow</tissue>
        <tissue>Placenta</tissue>
        <tissue>Skin</tissue>
    </source>
</reference>
<reference key="5">
    <citation type="journal article" date="2001" name="Yeast">
        <title>Characterization of 16 novel human genes showing high similarity to yeast sequences.</title>
        <authorList>
            <person name="Stanchi F."/>
            <person name="Bertocco E."/>
            <person name="Toppo S."/>
            <person name="Dioguardi R."/>
            <person name="Simionati B."/>
            <person name="Cannata N."/>
            <person name="Zimbello R."/>
            <person name="Lanfranchi G."/>
            <person name="Valle G."/>
        </authorList>
    </citation>
    <scope>NUCLEOTIDE SEQUENCE [MRNA] OF 55-228 (ISOFORM 1)</scope>
    <source>
        <tissue>Spleen</tissue>
    </source>
</reference>
<reference key="6">
    <citation type="journal article" date="2011" name="BMC Syst. Biol.">
        <title>Initial characterization of the human central proteome.</title>
        <authorList>
            <person name="Burkard T.R."/>
            <person name="Planyavsky M."/>
            <person name="Kaupe I."/>
            <person name="Breitwieser F.P."/>
            <person name="Buerckstuemmer T."/>
            <person name="Bennett K.L."/>
            <person name="Superti-Furga G."/>
            <person name="Colinge J."/>
        </authorList>
    </citation>
    <scope>IDENTIFICATION BY MASS SPECTROMETRY [LARGE SCALE ANALYSIS]</scope>
</reference>
<reference key="7">
    <citation type="journal article" date="2012" name="Proc. Natl. Acad. Sci. U.S.A.">
        <title>N-terminal acetylome analyses and functional insights of the N-terminal acetyltransferase NatB.</title>
        <authorList>
            <person name="Van Damme P."/>
            <person name="Lasa M."/>
            <person name="Polevoda B."/>
            <person name="Gazquez C."/>
            <person name="Elosegui-Artola A."/>
            <person name="Kim D.S."/>
            <person name="De Juan-Pardo E."/>
            <person name="Demeyer K."/>
            <person name="Hole K."/>
            <person name="Larrea E."/>
            <person name="Timmerman E."/>
            <person name="Prieto J."/>
            <person name="Arnesen T."/>
            <person name="Sherman F."/>
            <person name="Gevaert K."/>
            <person name="Aldabe R."/>
        </authorList>
    </citation>
    <scope>ACETYLATION [LARGE SCALE ANALYSIS] AT ALA-2</scope>
    <scope>CLEAVAGE OF INITIATOR METHIONINE [LARGE SCALE ANALYSIS]</scope>
    <scope>IDENTIFICATION BY MASS SPECTROMETRY [LARGE SCALE ANALYSIS]</scope>
</reference>
<reference evidence="5 6 7" key="8">
    <citation type="journal article" date="2011" name="FASEB J.">
        <title>Conversion of D-ribulose 5-phosphate to D-xylulose 5-phosphate: new insights from structural and biochemical studies on human RPE.</title>
        <authorList>
            <person name="Liang W."/>
            <person name="Ouyang S."/>
            <person name="Shaw N."/>
            <person name="Joachimiak A."/>
            <person name="Zhang R."/>
            <person name="Liu Z.J."/>
        </authorList>
    </citation>
    <scope>X-RAY CRYSTALLOGRAPHY (1.70 ANGSTROMS) IN COMPLEXES WITH IRON ION; D-RIBULOSE 5-PHOSPHATE AND D-XYLULOSE 5-PHOSPHATE</scope>
    <scope>FUNCTION</scope>
    <scope>CATALYTIC ACTIVITY</scope>
    <scope>COFACTOR</scope>
    <scope>MUTAGENESIS OF SER-10; LEU-12; HIS-35; ASP-37; MET-39; HIS-70; MET-72; MET-141 AND ASP-175</scope>
    <scope>PATHWAY</scope>
    <scope>ACTIVE SITE</scope>
</reference>
<reference evidence="8" key="9">
    <citation type="submission" date="2011-03" db="PDB data bank">
        <title>Crystal structure of a D-ribulose-5-phosphate-3-epimerase (NP_954699) from Homo sapiens at 2.20 A resolution.</title>
        <authorList>
            <consortium name="Joint center for structural genomics (JCSG)"/>
        </authorList>
    </citation>
    <scope>X-RAY CRYSTALLOGRAPHY (2.20 ANGSTROMS) OF 1-224 IN COMPLEX WITH NICKEL; ZINC AND IRON IONS</scope>
</reference>
<evidence type="ECO:0000269" key="1">
    <source>
    </source>
</evidence>
<evidence type="ECO:0000269" key="2">
    <source ref="9"/>
</evidence>
<evidence type="ECO:0000303" key="3">
    <source>
    </source>
</evidence>
<evidence type="ECO:0000305" key="4"/>
<evidence type="ECO:0007744" key="5">
    <source>
        <dbReference type="PDB" id="3OVP"/>
    </source>
</evidence>
<evidence type="ECO:0007744" key="6">
    <source>
        <dbReference type="PDB" id="3OVQ"/>
    </source>
</evidence>
<evidence type="ECO:0007744" key="7">
    <source>
        <dbReference type="PDB" id="3OVR"/>
    </source>
</evidence>
<evidence type="ECO:0007744" key="8">
    <source>
        <dbReference type="PDB" id="3QC3"/>
    </source>
</evidence>
<evidence type="ECO:0007744" key="9">
    <source>
    </source>
</evidence>
<evidence type="ECO:0007829" key="10">
    <source>
        <dbReference type="PDB" id="3OVP"/>
    </source>
</evidence>
<feature type="initiator methionine" description="Removed" evidence="9">
    <location>
        <position position="1"/>
    </location>
</feature>
<feature type="chain" id="PRO_0000171587" description="Ribulose-phosphate 3-epimerase">
    <location>
        <begin position="2"/>
        <end position="228"/>
    </location>
</feature>
<feature type="active site" description="Proton acceptor" evidence="1 6 7">
    <location>
        <position position="37"/>
    </location>
</feature>
<feature type="active site" description="Proton donor" evidence="1 6 7">
    <location>
        <position position="175"/>
    </location>
</feature>
<feature type="binding site" evidence="1 7">
    <location>
        <position position="10"/>
    </location>
    <ligand>
        <name>substrate</name>
    </ligand>
</feature>
<feature type="binding site" evidence="1 2 5 6 7 8">
    <location>
        <position position="35"/>
    </location>
    <ligand>
        <name>a divalent metal cation</name>
        <dbReference type="ChEBI" id="CHEBI:60240"/>
    </ligand>
</feature>
<feature type="binding site" evidence="1 2 5 6 7 8">
    <location>
        <position position="37"/>
    </location>
    <ligand>
        <name>a divalent metal cation</name>
        <dbReference type="ChEBI" id="CHEBI:60240"/>
    </ligand>
</feature>
<feature type="binding site" evidence="1 2 5 6 7 8">
    <location>
        <position position="70"/>
    </location>
    <ligand>
        <name>a divalent metal cation</name>
        <dbReference type="ChEBI" id="CHEBI:60240"/>
    </ligand>
</feature>
<feature type="binding site" evidence="1 6 7">
    <location>
        <position position="70"/>
    </location>
    <ligand>
        <name>substrate</name>
    </ligand>
</feature>
<feature type="binding site" evidence="1 6 7">
    <location>
        <begin position="146"/>
        <end position="149"/>
    </location>
    <ligand>
        <name>substrate</name>
    </ligand>
</feature>
<feature type="binding site" evidence="1 6 7">
    <location>
        <begin position="175"/>
        <end position="177"/>
    </location>
    <ligand>
        <name>substrate</name>
    </ligand>
</feature>
<feature type="binding site" evidence="1 2 5 6 7 8">
    <location>
        <position position="175"/>
    </location>
    <ligand>
        <name>a divalent metal cation</name>
        <dbReference type="ChEBI" id="CHEBI:60240"/>
    </ligand>
</feature>
<feature type="binding site" evidence="1 6 7">
    <location>
        <begin position="197"/>
        <end position="198"/>
    </location>
    <ligand>
        <name>substrate</name>
    </ligand>
</feature>
<feature type="modified residue" description="N-acetylalanine" evidence="9">
    <location>
        <position position="2"/>
    </location>
</feature>
<feature type="splice variant" id="VSP_047117" description="In isoform 3 and isoform 5." evidence="4">
    <location>
        <begin position="1"/>
        <end position="68"/>
    </location>
</feature>
<feature type="splice variant" id="VSP_008317" description="In isoform 2." evidence="3">
    <location>
        <begin position="43"/>
        <end position="68"/>
    </location>
</feature>
<feature type="splice variant" id="VSP_008318" description="In isoform 2 and isoform 3." evidence="3">
    <original>K</original>
    <variation>KSCSVTQAEVQWHSQGPLQ</variation>
    <location>
        <position position="114"/>
    </location>
</feature>
<feature type="splice variant" id="VSP_055265" description="In isoform 4." evidence="3">
    <location>
        <begin position="160"/>
        <end position="188"/>
    </location>
</feature>
<feature type="mutagenesis site" description="Nearly abolishes enzyme activity." evidence="1">
    <original>S</original>
    <variation>A</variation>
    <location>
        <position position="10"/>
    </location>
</feature>
<feature type="mutagenesis site" description="Reduces enzyme activity by half." evidence="1">
    <original>L</original>
    <variation>A</variation>
    <location>
        <position position="12"/>
    </location>
</feature>
<feature type="mutagenesis site" description="Alters protein structure. Nearly abolishes enzyme activity." evidence="1">
    <original>H</original>
    <variation>A</variation>
    <location>
        <position position="35"/>
    </location>
</feature>
<feature type="mutagenesis site" description="Alters protein structure. Nearly abolishes enzyme activity." evidence="1">
    <original>D</original>
    <variation>A</variation>
    <location>
        <position position="37"/>
    </location>
</feature>
<feature type="mutagenesis site" description="Lowers enzyme activity by 10%." evidence="1">
    <original>M</original>
    <variation>A</variation>
    <location>
        <position position="39"/>
    </location>
</feature>
<feature type="mutagenesis site" description="Alters protein structure." evidence="1">
    <original>H</original>
    <variation>A</variation>
    <location>
        <position position="70"/>
    </location>
</feature>
<feature type="mutagenesis site" description="Reduces enzyme activity by half." evidence="1">
    <original>M</original>
    <variation>A</variation>
    <location>
        <position position="72"/>
    </location>
</feature>
<feature type="mutagenesis site" description="No effect on enzyme activity." evidence="1">
    <original>M</original>
    <variation>A</variation>
    <location>
        <position position="141"/>
    </location>
</feature>
<feature type="mutagenesis site" description="Alters protein structure." evidence="1">
    <original>D</original>
    <variation>A</variation>
    <location>
        <position position="175"/>
    </location>
</feature>
<feature type="sequence conflict" description="In Ref. 1; BAC04212." evidence="4" ref="1">
    <original>P</original>
    <variation>L</variation>
    <location>
        <position position="180"/>
    </location>
</feature>
<feature type="strand" evidence="10">
    <location>
        <begin position="6"/>
        <end position="10"/>
    </location>
</feature>
<feature type="helix" evidence="10">
    <location>
        <begin position="16"/>
        <end position="18"/>
    </location>
</feature>
<feature type="helix" evidence="10">
    <location>
        <begin position="19"/>
        <end position="28"/>
    </location>
</feature>
<feature type="strand" evidence="10">
    <location>
        <begin position="34"/>
        <end position="45"/>
    </location>
</feature>
<feature type="helix" evidence="10">
    <location>
        <begin position="51"/>
        <end position="61"/>
    </location>
</feature>
<feature type="strand" evidence="10">
    <location>
        <begin position="63"/>
        <end position="65"/>
    </location>
</feature>
<feature type="strand" evidence="10">
    <location>
        <begin position="67"/>
        <end position="72"/>
    </location>
</feature>
<feature type="helix" evidence="10">
    <location>
        <begin position="76"/>
        <end position="79"/>
    </location>
</feature>
<feature type="helix" evidence="10">
    <location>
        <begin position="80"/>
        <end position="86"/>
    </location>
</feature>
<feature type="strand" evidence="10">
    <location>
        <begin position="89"/>
        <end position="94"/>
    </location>
</feature>
<feature type="helix" evidence="10">
    <location>
        <begin position="95"/>
        <end position="97"/>
    </location>
</feature>
<feature type="helix" evidence="10">
    <location>
        <begin position="101"/>
        <end position="110"/>
    </location>
</feature>
<feature type="strand" evidence="10">
    <location>
        <begin position="114"/>
        <end position="119"/>
    </location>
</feature>
<feature type="helix" evidence="10">
    <location>
        <begin position="125"/>
        <end position="127"/>
    </location>
</feature>
<feature type="helix" evidence="10">
    <location>
        <begin position="129"/>
        <end position="134"/>
    </location>
</feature>
<feature type="strand" evidence="10">
    <location>
        <begin position="136"/>
        <end position="143"/>
    </location>
</feature>
<feature type="turn" evidence="10">
    <location>
        <begin position="145"/>
        <end position="147"/>
    </location>
</feature>
<feature type="helix" evidence="10">
    <location>
        <begin position="154"/>
        <end position="156"/>
    </location>
</feature>
<feature type="helix" evidence="10">
    <location>
        <begin position="157"/>
        <end position="166"/>
    </location>
</feature>
<feature type="strand" evidence="10">
    <location>
        <begin position="171"/>
        <end position="177"/>
    </location>
</feature>
<feature type="turn" evidence="10">
    <location>
        <begin position="180"/>
        <end position="182"/>
    </location>
</feature>
<feature type="helix" evidence="10">
    <location>
        <begin position="183"/>
        <end position="189"/>
    </location>
</feature>
<feature type="strand" evidence="10">
    <location>
        <begin position="193"/>
        <end position="197"/>
    </location>
</feature>
<feature type="helix" evidence="10">
    <location>
        <begin position="198"/>
        <end position="201"/>
    </location>
</feature>
<feature type="helix" evidence="10">
    <location>
        <begin position="206"/>
        <end position="223"/>
    </location>
</feature>
<protein>
    <recommendedName>
        <fullName>Ribulose-phosphate 3-epimerase</fullName>
        <ecNumber evidence="1">5.1.3.1</ecNumber>
    </recommendedName>
    <alternativeName>
        <fullName>Ribulose-5-phosphate-3-epimerase</fullName>
    </alternativeName>
</protein>